<name>ATPF_ACIF2</name>
<accession>B7JB88</accession>
<organism>
    <name type="scientific">Acidithiobacillus ferrooxidans (strain ATCC 23270 / DSM 14882 / CIP 104768 / NCIMB 8455)</name>
    <name type="common">Ferrobacillus ferrooxidans (strain ATCC 23270)</name>
    <dbReference type="NCBI Taxonomy" id="243159"/>
    <lineage>
        <taxon>Bacteria</taxon>
        <taxon>Pseudomonadati</taxon>
        <taxon>Pseudomonadota</taxon>
        <taxon>Acidithiobacillia</taxon>
        <taxon>Acidithiobacillales</taxon>
        <taxon>Acidithiobacillaceae</taxon>
        <taxon>Acidithiobacillus</taxon>
    </lineage>
</organism>
<keyword id="KW-0066">ATP synthesis</keyword>
<keyword id="KW-0997">Cell inner membrane</keyword>
<keyword id="KW-1003">Cell membrane</keyword>
<keyword id="KW-0138">CF(0)</keyword>
<keyword id="KW-0375">Hydrogen ion transport</keyword>
<keyword id="KW-0406">Ion transport</keyword>
<keyword id="KW-0472">Membrane</keyword>
<keyword id="KW-1185">Reference proteome</keyword>
<keyword id="KW-0812">Transmembrane</keyword>
<keyword id="KW-1133">Transmembrane helix</keyword>
<keyword id="KW-0813">Transport</keyword>
<gene>
    <name evidence="1" type="primary">atpF</name>
    <name type="ordered locus">AFE_3207</name>
</gene>
<proteinExistence type="inferred from homology"/>
<dbReference type="EMBL" id="CP001219">
    <property type="protein sequence ID" value="ACK80242.1"/>
    <property type="molecule type" value="Genomic_DNA"/>
</dbReference>
<dbReference type="RefSeq" id="WP_009561113.1">
    <property type="nucleotide sequence ID" value="NC_011761.1"/>
</dbReference>
<dbReference type="SMR" id="B7JB88"/>
<dbReference type="STRING" id="243159.AFE_3207"/>
<dbReference type="PaxDb" id="243159-AFE_3207"/>
<dbReference type="GeneID" id="65282191"/>
<dbReference type="KEGG" id="afr:AFE_3207"/>
<dbReference type="eggNOG" id="COG0711">
    <property type="taxonomic scope" value="Bacteria"/>
</dbReference>
<dbReference type="HOGENOM" id="CLU_079215_4_2_6"/>
<dbReference type="Proteomes" id="UP000001362">
    <property type="component" value="Chromosome"/>
</dbReference>
<dbReference type="GO" id="GO:0005886">
    <property type="term" value="C:plasma membrane"/>
    <property type="evidence" value="ECO:0007669"/>
    <property type="project" value="UniProtKB-SubCell"/>
</dbReference>
<dbReference type="GO" id="GO:0045259">
    <property type="term" value="C:proton-transporting ATP synthase complex"/>
    <property type="evidence" value="ECO:0007669"/>
    <property type="project" value="UniProtKB-KW"/>
</dbReference>
<dbReference type="GO" id="GO:0046933">
    <property type="term" value="F:proton-transporting ATP synthase activity, rotational mechanism"/>
    <property type="evidence" value="ECO:0007669"/>
    <property type="project" value="UniProtKB-UniRule"/>
</dbReference>
<dbReference type="GO" id="GO:0046961">
    <property type="term" value="F:proton-transporting ATPase activity, rotational mechanism"/>
    <property type="evidence" value="ECO:0007669"/>
    <property type="project" value="TreeGrafter"/>
</dbReference>
<dbReference type="CDD" id="cd06503">
    <property type="entry name" value="ATP-synt_Fo_b"/>
    <property type="match status" value="1"/>
</dbReference>
<dbReference type="Gene3D" id="1.20.5.620">
    <property type="entry name" value="F1F0 ATP synthase subunit B, membrane domain"/>
    <property type="match status" value="1"/>
</dbReference>
<dbReference type="HAMAP" id="MF_01398">
    <property type="entry name" value="ATP_synth_b_bprime"/>
    <property type="match status" value="1"/>
</dbReference>
<dbReference type="InterPro" id="IPR028987">
    <property type="entry name" value="ATP_synth_B-like_membr_sf"/>
</dbReference>
<dbReference type="InterPro" id="IPR002146">
    <property type="entry name" value="ATP_synth_b/b'su_bac/chlpt"/>
</dbReference>
<dbReference type="InterPro" id="IPR005864">
    <property type="entry name" value="ATP_synth_F0_bsu_bac"/>
</dbReference>
<dbReference type="InterPro" id="IPR050059">
    <property type="entry name" value="ATP_synthase_B_chain"/>
</dbReference>
<dbReference type="NCBIfam" id="TIGR01144">
    <property type="entry name" value="ATP_synt_b"/>
    <property type="match status" value="1"/>
</dbReference>
<dbReference type="NCBIfam" id="NF004411">
    <property type="entry name" value="PRK05759.1-2"/>
    <property type="match status" value="1"/>
</dbReference>
<dbReference type="PANTHER" id="PTHR33445:SF1">
    <property type="entry name" value="ATP SYNTHASE SUBUNIT B"/>
    <property type="match status" value="1"/>
</dbReference>
<dbReference type="PANTHER" id="PTHR33445">
    <property type="entry name" value="ATP SYNTHASE SUBUNIT B', CHLOROPLASTIC"/>
    <property type="match status" value="1"/>
</dbReference>
<dbReference type="Pfam" id="PF00430">
    <property type="entry name" value="ATP-synt_B"/>
    <property type="match status" value="1"/>
</dbReference>
<dbReference type="SUPFAM" id="SSF81573">
    <property type="entry name" value="F1F0 ATP synthase subunit B, membrane domain"/>
    <property type="match status" value="1"/>
</dbReference>
<comment type="function">
    <text evidence="1">F(1)F(0) ATP synthase produces ATP from ADP in the presence of a proton or sodium gradient. F-type ATPases consist of two structural domains, F(1) containing the extramembraneous catalytic core and F(0) containing the membrane proton channel, linked together by a central stalk and a peripheral stalk. During catalysis, ATP synthesis in the catalytic domain of F(1) is coupled via a rotary mechanism of the central stalk subunits to proton translocation.</text>
</comment>
<comment type="function">
    <text evidence="1">Component of the F(0) channel, it forms part of the peripheral stalk, linking F(1) to F(0).</text>
</comment>
<comment type="subunit">
    <text evidence="1">F-type ATPases have 2 components, F(1) - the catalytic core - and F(0) - the membrane proton channel. F(1) has five subunits: alpha(3), beta(3), gamma(1), delta(1), epsilon(1). F(0) has three main subunits: a(1), b(2) and c(10-14). The alpha and beta chains form an alternating ring which encloses part of the gamma chain. F(1) is attached to F(0) by a central stalk formed by the gamma and epsilon chains, while a peripheral stalk is formed by the delta and b chains.</text>
</comment>
<comment type="subcellular location">
    <subcellularLocation>
        <location evidence="1">Cell inner membrane</location>
        <topology evidence="1">Single-pass membrane protein</topology>
    </subcellularLocation>
</comment>
<comment type="similarity">
    <text evidence="1">Belongs to the ATPase B chain family.</text>
</comment>
<protein>
    <recommendedName>
        <fullName evidence="1">ATP synthase subunit b</fullName>
    </recommendedName>
    <alternativeName>
        <fullName evidence="1">ATP synthase F(0) sector subunit b</fullName>
    </alternativeName>
    <alternativeName>
        <fullName evidence="1">ATPase subunit I</fullName>
    </alternativeName>
    <alternativeName>
        <fullName evidence="1">F-type ATPase subunit b</fullName>
        <shortName evidence="1">F-ATPase subunit b</shortName>
    </alternativeName>
</protein>
<reference key="1">
    <citation type="journal article" date="2008" name="BMC Genomics">
        <title>Acidithiobacillus ferrooxidans metabolism: from genome sequence to industrial applications.</title>
        <authorList>
            <person name="Valdes J."/>
            <person name="Pedroso I."/>
            <person name="Quatrini R."/>
            <person name="Dodson R.J."/>
            <person name="Tettelin H."/>
            <person name="Blake R. II"/>
            <person name="Eisen J.A."/>
            <person name="Holmes D.S."/>
        </authorList>
    </citation>
    <scope>NUCLEOTIDE SEQUENCE [LARGE SCALE GENOMIC DNA]</scope>
    <source>
        <strain>ATCC 23270 / DSM 14882 / CIP 104768 / NCIMB 8455</strain>
    </source>
</reference>
<evidence type="ECO:0000255" key="1">
    <source>
        <dbReference type="HAMAP-Rule" id="MF_01398"/>
    </source>
</evidence>
<sequence>MNPVGINGTLIVQLVTFVILVALLYKYMYGPLRKVMDDRRAKIADGLAAAERGKEEMALAQKRATELLREAKDKAAEIIANAERRGVELREEAQGKAREEADRIIASARAEIDVETNRAREVLRGQVVELVVNGTQRILHREIDDQTHRDIIDRMVGQL</sequence>
<feature type="chain" id="PRO_0000368283" description="ATP synthase subunit b">
    <location>
        <begin position="1"/>
        <end position="159"/>
    </location>
</feature>
<feature type="transmembrane region" description="Helical" evidence="1">
    <location>
        <begin position="4"/>
        <end position="24"/>
    </location>
</feature>